<dbReference type="EMBL" id="CP000266">
    <property type="protein sequence ID" value="ABF05636.1"/>
    <property type="molecule type" value="Genomic_DNA"/>
</dbReference>
<dbReference type="RefSeq" id="WP_001295676.1">
    <property type="nucleotide sequence ID" value="NC_008258.1"/>
</dbReference>
<dbReference type="SMR" id="Q0SZ79"/>
<dbReference type="KEGG" id="sfv:SFV_3606"/>
<dbReference type="HOGENOM" id="CLU_2048166_0_0_6"/>
<dbReference type="Proteomes" id="UP000000659">
    <property type="component" value="Chromosome"/>
</dbReference>
<dbReference type="GO" id="GO:0043565">
    <property type="term" value="F:sequence-specific DNA binding"/>
    <property type="evidence" value="ECO:0007669"/>
    <property type="project" value="UniProtKB-ARBA"/>
</dbReference>
<dbReference type="GO" id="GO:0006355">
    <property type="term" value="P:regulation of DNA-templated transcription"/>
    <property type="evidence" value="ECO:0007669"/>
    <property type="project" value="InterPro"/>
</dbReference>
<dbReference type="CDD" id="cd21631">
    <property type="entry name" value="RHH_CopG_NikR-like"/>
    <property type="match status" value="1"/>
</dbReference>
<dbReference type="Gene3D" id="1.10.1220.10">
    <property type="entry name" value="Met repressor-like"/>
    <property type="match status" value="1"/>
</dbReference>
<dbReference type="InterPro" id="IPR013321">
    <property type="entry name" value="Arc_rbn_hlx_hlx"/>
</dbReference>
<dbReference type="InterPro" id="IPR002145">
    <property type="entry name" value="CopG"/>
</dbReference>
<dbReference type="Pfam" id="PF01402">
    <property type="entry name" value="RHH_1"/>
    <property type="match status" value="1"/>
</dbReference>
<proteinExistence type="inferred from homology"/>
<feature type="chain" id="PRO_0000293690" description="Uncharacterized protein YiiE">
    <location>
        <begin position="1"/>
        <end position="72"/>
    </location>
</feature>
<feature type="region of interest" description="Disordered" evidence="1">
    <location>
        <begin position="51"/>
        <end position="72"/>
    </location>
</feature>
<reference key="1">
    <citation type="journal article" date="2006" name="BMC Genomics">
        <title>Complete genome sequence of Shigella flexneri 5b and comparison with Shigella flexneri 2a.</title>
        <authorList>
            <person name="Nie H."/>
            <person name="Yang F."/>
            <person name="Zhang X."/>
            <person name="Yang J."/>
            <person name="Chen L."/>
            <person name="Wang J."/>
            <person name="Xiong Z."/>
            <person name="Peng J."/>
            <person name="Sun L."/>
            <person name="Dong J."/>
            <person name="Xue Y."/>
            <person name="Xu X."/>
            <person name="Chen S."/>
            <person name="Yao Z."/>
            <person name="Shen Y."/>
            <person name="Jin Q."/>
        </authorList>
    </citation>
    <scope>NUCLEOTIDE SEQUENCE [LARGE SCALE GENOMIC DNA]</scope>
    <source>
        <strain>8401</strain>
    </source>
</reference>
<gene>
    <name type="primary">yiiE</name>
    <name type="ordered locus">SFV_3606</name>
</gene>
<organism>
    <name type="scientific">Shigella flexneri serotype 5b (strain 8401)</name>
    <dbReference type="NCBI Taxonomy" id="373384"/>
    <lineage>
        <taxon>Bacteria</taxon>
        <taxon>Pseudomonadati</taxon>
        <taxon>Pseudomonadota</taxon>
        <taxon>Gammaproteobacteria</taxon>
        <taxon>Enterobacterales</taxon>
        <taxon>Enterobacteriaceae</taxon>
        <taxon>Shigella</taxon>
    </lineage>
</organism>
<protein>
    <recommendedName>
        <fullName>Uncharacterized protein YiiE</fullName>
    </recommendedName>
</protein>
<sequence>MAMNTVFLHLSEEAIKRLNKLRGWRKVSRSAILREAVEQYLERQQFPVRKAKGGRQKGEVVGVDDQCKEHKE</sequence>
<comment type="similarity">
    <text evidence="2">Belongs to the YiiE family.</text>
</comment>
<evidence type="ECO:0000256" key="1">
    <source>
        <dbReference type="SAM" id="MobiDB-lite"/>
    </source>
</evidence>
<evidence type="ECO:0000305" key="2"/>
<name>YIIE_SHIF8</name>
<accession>Q0SZ79</accession>